<protein>
    <recommendedName>
        <fullName evidence="1">Large ribosomal subunit protein uL11</fullName>
    </recommendedName>
    <alternativeName>
        <fullName evidence="2">50S ribosomal protein L11</fullName>
    </alternativeName>
</protein>
<proteinExistence type="inferred from homology"/>
<sequence>MAKKVIGEIKLQIAATKANPSPPVGPALGQKGVNIMEFCKAFNEKTKDMVGFNIPVVITVYADKSFTFITKQPPATDLIKKAAGITKGTDNPLKNKVGKLTKAQVLEIVEKKLVDLNTNDKEQAAKIIAGSARSMGVEVVD</sequence>
<name>RL11_CAMC1</name>
<gene>
    <name evidence="1" type="primary">rplK</name>
    <name type="ordered locus">Ccon26_06590</name>
    <name type="ORF">CCC13826_0170</name>
</gene>
<organism>
    <name type="scientific">Campylobacter concisus (strain 13826)</name>
    <dbReference type="NCBI Taxonomy" id="360104"/>
    <lineage>
        <taxon>Bacteria</taxon>
        <taxon>Pseudomonadati</taxon>
        <taxon>Campylobacterota</taxon>
        <taxon>Epsilonproteobacteria</taxon>
        <taxon>Campylobacterales</taxon>
        <taxon>Campylobacteraceae</taxon>
        <taxon>Campylobacter</taxon>
    </lineage>
</organism>
<comment type="function">
    <text evidence="1">Forms part of the ribosomal stalk which helps the ribosome interact with GTP-bound translation factors.</text>
</comment>
<comment type="subunit">
    <text evidence="1">Part of the ribosomal stalk of the 50S ribosomal subunit. Interacts with L10 and the large rRNA to form the base of the stalk. L10 forms an elongated spine to which L12 dimers bind in a sequential fashion forming a multimeric L10(L12)X complex.</text>
</comment>
<comment type="PTM">
    <text evidence="1">One or more lysine residues are methylated.</text>
</comment>
<comment type="similarity">
    <text evidence="1">Belongs to the universal ribosomal protein uL11 family.</text>
</comment>
<evidence type="ECO:0000255" key="1">
    <source>
        <dbReference type="HAMAP-Rule" id="MF_00736"/>
    </source>
</evidence>
<evidence type="ECO:0000305" key="2"/>
<keyword id="KW-0488">Methylation</keyword>
<keyword id="KW-0687">Ribonucleoprotein</keyword>
<keyword id="KW-0689">Ribosomal protein</keyword>
<keyword id="KW-0694">RNA-binding</keyword>
<keyword id="KW-0699">rRNA-binding</keyword>
<dbReference type="EMBL" id="CP000792">
    <property type="protein sequence ID" value="EAT97372.1"/>
    <property type="molecule type" value="Genomic_DNA"/>
</dbReference>
<dbReference type="RefSeq" id="WP_002941145.1">
    <property type="nucleotide sequence ID" value="NC_009802.2"/>
</dbReference>
<dbReference type="SMR" id="A7ZCN3"/>
<dbReference type="STRING" id="360104.CCC13826_0170"/>
<dbReference type="KEGG" id="cco:CCC13826_0170"/>
<dbReference type="eggNOG" id="COG0080">
    <property type="taxonomic scope" value="Bacteria"/>
</dbReference>
<dbReference type="HOGENOM" id="CLU_074237_2_0_7"/>
<dbReference type="OrthoDB" id="9802408at2"/>
<dbReference type="Proteomes" id="UP000001121">
    <property type="component" value="Chromosome"/>
</dbReference>
<dbReference type="GO" id="GO:0022625">
    <property type="term" value="C:cytosolic large ribosomal subunit"/>
    <property type="evidence" value="ECO:0007669"/>
    <property type="project" value="TreeGrafter"/>
</dbReference>
<dbReference type="GO" id="GO:0070180">
    <property type="term" value="F:large ribosomal subunit rRNA binding"/>
    <property type="evidence" value="ECO:0007669"/>
    <property type="project" value="UniProtKB-UniRule"/>
</dbReference>
<dbReference type="GO" id="GO:0003735">
    <property type="term" value="F:structural constituent of ribosome"/>
    <property type="evidence" value="ECO:0007669"/>
    <property type="project" value="InterPro"/>
</dbReference>
<dbReference type="GO" id="GO:0006412">
    <property type="term" value="P:translation"/>
    <property type="evidence" value="ECO:0007669"/>
    <property type="project" value="UniProtKB-UniRule"/>
</dbReference>
<dbReference type="CDD" id="cd00349">
    <property type="entry name" value="Ribosomal_L11"/>
    <property type="match status" value="1"/>
</dbReference>
<dbReference type="FunFam" id="1.10.10.250:FF:000001">
    <property type="entry name" value="50S ribosomal protein L11"/>
    <property type="match status" value="1"/>
</dbReference>
<dbReference type="FunFam" id="3.30.1550.10:FF:000001">
    <property type="entry name" value="50S ribosomal protein L11"/>
    <property type="match status" value="1"/>
</dbReference>
<dbReference type="Gene3D" id="1.10.10.250">
    <property type="entry name" value="Ribosomal protein L11, C-terminal domain"/>
    <property type="match status" value="1"/>
</dbReference>
<dbReference type="Gene3D" id="3.30.1550.10">
    <property type="entry name" value="Ribosomal protein L11/L12, N-terminal domain"/>
    <property type="match status" value="1"/>
</dbReference>
<dbReference type="HAMAP" id="MF_00736">
    <property type="entry name" value="Ribosomal_uL11"/>
    <property type="match status" value="1"/>
</dbReference>
<dbReference type="InterPro" id="IPR000911">
    <property type="entry name" value="Ribosomal_uL11"/>
</dbReference>
<dbReference type="InterPro" id="IPR006519">
    <property type="entry name" value="Ribosomal_uL11_bac-typ"/>
</dbReference>
<dbReference type="InterPro" id="IPR020783">
    <property type="entry name" value="Ribosomal_uL11_C"/>
</dbReference>
<dbReference type="InterPro" id="IPR036769">
    <property type="entry name" value="Ribosomal_uL11_C_sf"/>
</dbReference>
<dbReference type="InterPro" id="IPR020785">
    <property type="entry name" value="Ribosomal_uL11_CS"/>
</dbReference>
<dbReference type="InterPro" id="IPR020784">
    <property type="entry name" value="Ribosomal_uL11_N"/>
</dbReference>
<dbReference type="InterPro" id="IPR036796">
    <property type="entry name" value="Ribosomal_uL11_N_sf"/>
</dbReference>
<dbReference type="NCBIfam" id="TIGR01632">
    <property type="entry name" value="L11_bact"/>
    <property type="match status" value="1"/>
</dbReference>
<dbReference type="PANTHER" id="PTHR11661">
    <property type="entry name" value="60S RIBOSOMAL PROTEIN L12"/>
    <property type="match status" value="1"/>
</dbReference>
<dbReference type="PANTHER" id="PTHR11661:SF1">
    <property type="entry name" value="LARGE RIBOSOMAL SUBUNIT PROTEIN UL11M"/>
    <property type="match status" value="1"/>
</dbReference>
<dbReference type="Pfam" id="PF00298">
    <property type="entry name" value="Ribosomal_L11"/>
    <property type="match status" value="1"/>
</dbReference>
<dbReference type="Pfam" id="PF03946">
    <property type="entry name" value="Ribosomal_L11_N"/>
    <property type="match status" value="1"/>
</dbReference>
<dbReference type="SMART" id="SM00649">
    <property type="entry name" value="RL11"/>
    <property type="match status" value="1"/>
</dbReference>
<dbReference type="SUPFAM" id="SSF54747">
    <property type="entry name" value="Ribosomal L11/L12e N-terminal domain"/>
    <property type="match status" value="1"/>
</dbReference>
<dbReference type="SUPFAM" id="SSF46906">
    <property type="entry name" value="Ribosomal protein L11, C-terminal domain"/>
    <property type="match status" value="1"/>
</dbReference>
<dbReference type="PROSITE" id="PS00359">
    <property type="entry name" value="RIBOSOMAL_L11"/>
    <property type="match status" value="1"/>
</dbReference>
<feature type="chain" id="PRO_1000046158" description="Large ribosomal subunit protein uL11">
    <location>
        <begin position="1"/>
        <end position="141"/>
    </location>
</feature>
<accession>A7ZCN3</accession>
<reference key="1">
    <citation type="submission" date="2007-10" db="EMBL/GenBank/DDBJ databases">
        <title>Genome sequence of Campylobacter concisus 13826 isolated from human feces.</title>
        <authorList>
            <person name="Fouts D.E."/>
            <person name="Mongodin E.F."/>
            <person name="Puiu D."/>
            <person name="Sebastian Y."/>
            <person name="Miller W.G."/>
            <person name="Mandrell R.E."/>
            <person name="On S."/>
            <person name="Nelson K.E."/>
        </authorList>
    </citation>
    <scope>NUCLEOTIDE SEQUENCE [LARGE SCALE GENOMIC DNA]</scope>
    <source>
        <strain>13826</strain>
    </source>
</reference>